<evidence type="ECO:0000255" key="1">
    <source>
        <dbReference type="HAMAP-Rule" id="MF_00555"/>
    </source>
</evidence>
<comment type="catalytic activity">
    <reaction evidence="1">
        <text>L-aspartate + NH4(+) + ATP = L-asparagine + AMP + diphosphate + H(+)</text>
        <dbReference type="Rhea" id="RHEA:11372"/>
        <dbReference type="ChEBI" id="CHEBI:15378"/>
        <dbReference type="ChEBI" id="CHEBI:28938"/>
        <dbReference type="ChEBI" id="CHEBI:29991"/>
        <dbReference type="ChEBI" id="CHEBI:30616"/>
        <dbReference type="ChEBI" id="CHEBI:33019"/>
        <dbReference type="ChEBI" id="CHEBI:58048"/>
        <dbReference type="ChEBI" id="CHEBI:456215"/>
        <dbReference type="EC" id="6.3.1.1"/>
    </reaction>
</comment>
<comment type="pathway">
    <text evidence="1">Amino-acid biosynthesis; L-asparagine biosynthesis; L-asparagine from L-aspartate (ammonia route): step 1/1.</text>
</comment>
<comment type="subcellular location">
    <subcellularLocation>
        <location evidence="1">Cytoplasm</location>
    </subcellularLocation>
</comment>
<comment type="similarity">
    <text evidence="1">Belongs to the class-II aminoacyl-tRNA synthetase family. AsnA subfamily.</text>
</comment>
<accession>B7M5A0</accession>
<reference key="1">
    <citation type="journal article" date="2009" name="PLoS Genet.">
        <title>Organised genome dynamics in the Escherichia coli species results in highly diverse adaptive paths.</title>
        <authorList>
            <person name="Touchon M."/>
            <person name="Hoede C."/>
            <person name="Tenaillon O."/>
            <person name="Barbe V."/>
            <person name="Baeriswyl S."/>
            <person name="Bidet P."/>
            <person name="Bingen E."/>
            <person name="Bonacorsi S."/>
            <person name="Bouchier C."/>
            <person name="Bouvet O."/>
            <person name="Calteau A."/>
            <person name="Chiapello H."/>
            <person name="Clermont O."/>
            <person name="Cruveiller S."/>
            <person name="Danchin A."/>
            <person name="Diard M."/>
            <person name="Dossat C."/>
            <person name="Karoui M.E."/>
            <person name="Frapy E."/>
            <person name="Garry L."/>
            <person name="Ghigo J.M."/>
            <person name="Gilles A.M."/>
            <person name="Johnson J."/>
            <person name="Le Bouguenec C."/>
            <person name="Lescat M."/>
            <person name="Mangenot S."/>
            <person name="Martinez-Jehanne V."/>
            <person name="Matic I."/>
            <person name="Nassif X."/>
            <person name="Oztas S."/>
            <person name="Petit M.A."/>
            <person name="Pichon C."/>
            <person name="Rouy Z."/>
            <person name="Ruf C.S."/>
            <person name="Schneider D."/>
            <person name="Tourret J."/>
            <person name="Vacherie B."/>
            <person name="Vallenet D."/>
            <person name="Medigue C."/>
            <person name="Rocha E.P.C."/>
            <person name="Denamur E."/>
        </authorList>
    </citation>
    <scope>NUCLEOTIDE SEQUENCE [LARGE SCALE GENOMIC DNA]</scope>
    <source>
        <strain>IAI1</strain>
    </source>
</reference>
<organism>
    <name type="scientific">Escherichia coli O8 (strain IAI1)</name>
    <dbReference type="NCBI Taxonomy" id="585034"/>
    <lineage>
        <taxon>Bacteria</taxon>
        <taxon>Pseudomonadati</taxon>
        <taxon>Pseudomonadota</taxon>
        <taxon>Gammaproteobacteria</taxon>
        <taxon>Enterobacterales</taxon>
        <taxon>Enterobacteriaceae</taxon>
        <taxon>Escherichia</taxon>
    </lineage>
</organism>
<feature type="chain" id="PRO_1000129114" description="Aspartate--ammonia ligase">
    <location>
        <begin position="1"/>
        <end position="330"/>
    </location>
</feature>
<protein>
    <recommendedName>
        <fullName evidence="1">Aspartate--ammonia ligase</fullName>
        <ecNumber evidence="1">6.3.1.1</ecNumber>
    </recommendedName>
    <alternativeName>
        <fullName evidence="1">Asparagine synthetase A</fullName>
    </alternativeName>
</protein>
<dbReference type="EC" id="6.3.1.1" evidence="1"/>
<dbReference type="EMBL" id="CU928160">
    <property type="protein sequence ID" value="CAR00722.1"/>
    <property type="molecule type" value="Genomic_DNA"/>
</dbReference>
<dbReference type="RefSeq" id="WP_000845134.1">
    <property type="nucleotide sequence ID" value="NC_011741.1"/>
</dbReference>
<dbReference type="SMR" id="B7M5A0"/>
<dbReference type="KEGG" id="ecr:ECIAI1_3928"/>
<dbReference type="HOGENOM" id="CLU_071543_0_0_6"/>
<dbReference type="UniPathway" id="UPA00134">
    <property type="reaction ID" value="UER00194"/>
</dbReference>
<dbReference type="GO" id="GO:0005829">
    <property type="term" value="C:cytosol"/>
    <property type="evidence" value="ECO:0007669"/>
    <property type="project" value="TreeGrafter"/>
</dbReference>
<dbReference type="GO" id="GO:0004071">
    <property type="term" value="F:aspartate-ammonia ligase activity"/>
    <property type="evidence" value="ECO:0007669"/>
    <property type="project" value="UniProtKB-UniRule"/>
</dbReference>
<dbReference type="GO" id="GO:0005524">
    <property type="term" value="F:ATP binding"/>
    <property type="evidence" value="ECO:0007669"/>
    <property type="project" value="UniProtKB-UniRule"/>
</dbReference>
<dbReference type="GO" id="GO:0070981">
    <property type="term" value="P:L-asparagine biosynthetic process"/>
    <property type="evidence" value="ECO:0007669"/>
    <property type="project" value="UniProtKB-UniRule"/>
</dbReference>
<dbReference type="CDD" id="cd00645">
    <property type="entry name" value="AsnA"/>
    <property type="match status" value="1"/>
</dbReference>
<dbReference type="FunFam" id="3.30.930.10:FF:000025">
    <property type="entry name" value="Aspartate--ammonia ligase"/>
    <property type="match status" value="1"/>
</dbReference>
<dbReference type="Gene3D" id="3.30.930.10">
    <property type="entry name" value="Bira Bifunctional Protein, Domain 2"/>
    <property type="match status" value="1"/>
</dbReference>
<dbReference type="HAMAP" id="MF_00555">
    <property type="entry name" value="AsnA"/>
    <property type="match status" value="1"/>
</dbReference>
<dbReference type="InterPro" id="IPR006195">
    <property type="entry name" value="aa-tRNA-synth_II"/>
</dbReference>
<dbReference type="InterPro" id="IPR045864">
    <property type="entry name" value="aa-tRNA-synth_II/BPL/LPL"/>
</dbReference>
<dbReference type="InterPro" id="IPR004618">
    <property type="entry name" value="AsnA"/>
</dbReference>
<dbReference type="NCBIfam" id="TIGR00669">
    <property type="entry name" value="asnA"/>
    <property type="match status" value="1"/>
</dbReference>
<dbReference type="PANTHER" id="PTHR30073">
    <property type="entry name" value="ASPARTATE--AMMONIA LIGASE"/>
    <property type="match status" value="1"/>
</dbReference>
<dbReference type="PANTHER" id="PTHR30073:SF5">
    <property type="entry name" value="ASPARTATE--AMMONIA LIGASE"/>
    <property type="match status" value="1"/>
</dbReference>
<dbReference type="Pfam" id="PF03590">
    <property type="entry name" value="AsnA"/>
    <property type="match status" value="1"/>
</dbReference>
<dbReference type="PIRSF" id="PIRSF001555">
    <property type="entry name" value="Asp_ammon_ligase"/>
    <property type="match status" value="1"/>
</dbReference>
<dbReference type="SUPFAM" id="SSF55681">
    <property type="entry name" value="Class II aaRS and biotin synthetases"/>
    <property type="match status" value="1"/>
</dbReference>
<dbReference type="PROSITE" id="PS50862">
    <property type="entry name" value="AA_TRNA_LIGASE_II"/>
    <property type="match status" value="1"/>
</dbReference>
<sequence>MKTAYIAKQRQISFVKSHFSRQLEERLGLIEVQAPILSRVGDGTQDNLSGCEKAVQVKVKALPDAQFEVVHSLAKWKRQTLGQHDFSAGEGLYTHMKALRPDEERLSPLHSVYVDQWDWERVMGDGERQFSTLKSTVEAIWAGIKATEAAVSEEFGLAPFLPDQIHFVHSQELLSRYPDLDAKGRERAIAKDLGAVFLVGIGGKLSDGHRHDVRAPDYDDWSTPSELGHAGLNGDILVWNPVLEDAFELSSMGIRVDADTLKHQLALTGDEDRLQLEWHQALLRGEMPQTIGGGIGQSRLTMLLLQLPHIGQVQCGVWPAAVRESVPSLL</sequence>
<gene>
    <name evidence="1" type="primary">asnA</name>
    <name type="ordered locus">ECIAI1_3928</name>
</gene>
<keyword id="KW-0028">Amino-acid biosynthesis</keyword>
<keyword id="KW-0061">Asparagine biosynthesis</keyword>
<keyword id="KW-0067">ATP-binding</keyword>
<keyword id="KW-0963">Cytoplasm</keyword>
<keyword id="KW-0436">Ligase</keyword>
<keyword id="KW-0547">Nucleotide-binding</keyword>
<proteinExistence type="inferred from homology"/>
<name>ASNA_ECO8A</name>